<gene>
    <name evidence="1" type="primary">glnA</name>
</gene>
<accession>P43518</accession>
<protein>
    <recommendedName>
        <fullName evidence="1">Glutamine synthetase</fullName>
        <shortName evidence="1">GS</shortName>
        <ecNumber evidence="1">6.3.1.2</ecNumber>
    </recommendedName>
    <alternativeName>
        <fullName evidence="8">Glutamate--ammonia ligase</fullName>
    </alternativeName>
    <alternativeName>
        <fullName evidence="1">Glutamine synthetase I beta</fullName>
        <shortName evidence="1">GSI beta</shortName>
    </alternativeName>
</protein>
<dbReference type="EC" id="6.3.1.2" evidence="1"/>
<dbReference type="EMBL" id="X71659">
    <property type="protein sequence ID" value="CAA50651.1"/>
    <property type="molecule type" value="Genomic_DNA"/>
</dbReference>
<dbReference type="PIR" id="S33181">
    <property type="entry name" value="S33181"/>
</dbReference>
<dbReference type="SMR" id="P43518"/>
<dbReference type="GO" id="GO:0005737">
    <property type="term" value="C:cytoplasm"/>
    <property type="evidence" value="ECO:0007669"/>
    <property type="project" value="UniProtKB-SubCell"/>
</dbReference>
<dbReference type="GO" id="GO:0016020">
    <property type="term" value="C:membrane"/>
    <property type="evidence" value="ECO:0007669"/>
    <property type="project" value="TreeGrafter"/>
</dbReference>
<dbReference type="GO" id="GO:0005524">
    <property type="term" value="F:ATP binding"/>
    <property type="evidence" value="ECO:0007669"/>
    <property type="project" value="UniProtKB-KW"/>
</dbReference>
<dbReference type="GO" id="GO:0004356">
    <property type="term" value="F:glutamine synthetase activity"/>
    <property type="evidence" value="ECO:0007669"/>
    <property type="project" value="UniProtKB-EC"/>
</dbReference>
<dbReference type="GO" id="GO:0046872">
    <property type="term" value="F:metal ion binding"/>
    <property type="evidence" value="ECO:0007669"/>
    <property type="project" value="UniProtKB-KW"/>
</dbReference>
<dbReference type="GO" id="GO:0006542">
    <property type="term" value="P:glutamine biosynthetic process"/>
    <property type="evidence" value="ECO:0007669"/>
    <property type="project" value="InterPro"/>
</dbReference>
<dbReference type="GO" id="GO:0009399">
    <property type="term" value="P:nitrogen fixation"/>
    <property type="evidence" value="ECO:0007669"/>
    <property type="project" value="UniProtKB-KW"/>
</dbReference>
<dbReference type="GO" id="GO:0019740">
    <property type="term" value="P:nitrogen utilization"/>
    <property type="evidence" value="ECO:0007669"/>
    <property type="project" value="TreeGrafter"/>
</dbReference>
<dbReference type="FunFam" id="3.30.590.10:FF:000001">
    <property type="entry name" value="Glutamine synthetase"/>
    <property type="match status" value="1"/>
</dbReference>
<dbReference type="Gene3D" id="3.10.20.70">
    <property type="entry name" value="Glutamine synthetase, N-terminal domain"/>
    <property type="match status" value="1"/>
</dbReference>
<dbReference type="Gene3D" id="3.30.590.10">
    <property type="entry name" value="Glutamine synthetase/guanido kinase, catalytic domain"/>
    <property type="match status" value="1"/>
</dbReference>
<dbReference type="InterPro" id="IPR008147">
    <property type="entry name" value="Gln_synt_N"/>
</dbReference>
<dbReference type="InterPro" id="IPR036651">
    <property type="entry name" value="Gln_synt_N_sf"/>
</dbReference>
<dbReference type="InterPro" id="IPR014746">
    <property type="entry name" value="Gln_synth/guanido_kin_cat_dom"/>
</dbReference>
<dbReference type="InterPro" id="IPR008146">
    <property type="entry name" value="Gln_synth_cat_dom"/>
</dbReference>
<dbReference type="InterPro" id="IPR027303">
    <property type="entry name" value="Gln_synth_gly_rich_site"/>
</dbReference>
<dbReference type="InterPro" id="IPR004809">
    <property type="entry name" value="Gln_synth_I"/>
</dbReference>
<dbReference type="InterPro" id="IPR027302">
    <property type="entry name" value="Gln_synth_N_conserv_site"/>
</dbReference>
<dbReference type="NCBIfam" id="TIGR00653">
    <property type="entry name" value="GlnA"/>
    <property type="match status" value="1"/>
</dbReference>
<dbReference type="PANTHER" id="PTHR43407">
    <property type="entry name" value="GLUTAMINE SYNTHETASE"/>
    <property type="match status" value="1"/>
</dbReference>
<dbReference type="PANTHER" id="PTHR43407:SF2">
    <property type="entry name" value="GLUTAMINE SYNTHETASE"/>
    <property type="match status" value="1"/>
</dbReference>
<dbReference type="Pfam" id="PF00120">
    <property type="entry name" value="Gln-synt_C"/>
    <property type="match status" value="1"/>
</dbReference>
<dbReference type="Pfam" id="PF03951">
    <property type="entry name" value="Gln-synt_N"/>
    <property type="match status" value="1"/>
</dbReference>
<dbReference type="SMART" id="SM01230">
    <property type="entry name" value="Gln-synt_C"/>
    <property type="match status" value="1"/>
</dbReference>
<dbReference type="SUPFAM" id="SSF54368">
    <property type="entry name" value="Glutamine synthetase, N-terminal domain"/>
    <property type="match status" value="1"/>
</dbReference>
<dbReference type="SUPFAM" id="SSF55931">
    <property type="entry name" value="Glutamine synthetase/guanido kinase"/>
    <property type="match status" value="1"/>
</dbReference>
<dbReference type="PROSITE" id="PS00180">
    <property type="entry name" value="GLNA_1"/>
    <property type="match status" value="1"/>
</dbReference>
<dbReference type="PROSITE" id="PS00181">
    <property type="entry name" value="GLNA_ATP"/>
    <property type="match status" value="1"/>
</dbReference>
<dbReference type="PROSITE" id="PS51986">
    <property type="entry name" value="GS_BETA_GRASP"/>
    <property type="match status" value="1"/>
</dbReference>
<dbReference type="PROSITE" id="PS51987">
    <property type="entry name" value="GS_CATALYTIC"/>
    <property type="match status" value="1"/>
</dbReference>
<reference key="1">
    <citation type="journal article" date="1994" name="Microbiology">
        <title>Nucleotide sequence and characterization of the Rhodobacter sphaeroides glnB and glnA genes.</title>
        <authorList>
            <person name="Zinchenko V.V."/>
            <person name="Churin Y."/>
            <person name="Shestopalov V.I."/>
            <person name="Shestakov S.V."/>
        </authorList>
    </citation>
    <scope>NUCLEOTIDE SEQUENCE [GENOMIC DNA]</scope>
    <source>
        <strain>2R</strain>
    </source>
</reference>
<proteinExistence type="inferred from homology"/>
<comment type="function">
    <text evidence="1">Catalyzes the ATP-dependent biosynthesis of glutamine from glutamate and ammonia.</text>
</comment>
<comment type="catalytic activity">
    <reaction evidence="1">
        <text>L-glutamate + NH4(+) + ATP = L-glutamine + ADP + phosphate + H(+)</text>
        <dbReference type="Rhea" id="RHEA:16169"/>
        <dbReference type="ChEBI" id="CHEBI:15378"/>
        <dbReference type="ChEBI" id="CHEBI:28938"/>
        <dbReference type="ChEBI" id="CHEBI:29985"/>
        <dbReference type="ChEBI" id="CHEBI:30616"/>
        <dbReference type="ChEBI" id="CHEBI:43474"/>
        <dbReference type="ChEBI" id="CHEBI:58359"/>
        <dbReference type="ChEBI" id="CHEBI:456216"/>
        <dbReference type="EC" id="6.3.1.2"/>
    </reaction>
</comment>
<comment type="cofactor">
    <cofactor evidence="4">
        <name>Mg(2+)</name>
        <dbReference type="ChEBI" id="CHEBI:18420"/>
    </cofactor>
    <text evidence="4">Binds 2 Mg(2+) ions per subunit.</text>
</comment>
<comment type="activity regulation">
    <text evidence="5">The activity of this enzyme could be controlled by adenylation under conditions of abundant glutamine.</text>
</comment>
<comment type="subunit">
    <text evidence="1">Oligomer of 12 subunits arranged in the form of two hexameric ring.</text>
</comment>
<comment type="subcellular location">
    <subcellularLocation>
        <location evidence="4">Cytoplasm</location>
    </subcellularLocation>
</comment>
<comment type="similarity">
    <text evidence="8">Belongs to the glutamine synthetase family.</text>
</comment>
<name>GLN1B_CERSP</name>
<feature type="chain" id="PRO_0000153256" description="Glutamine synthetase">
    <location>
        <begin position="1"/>
        <end position="467"/>
    </location>
</feature>
<feature type="domain" description="GS beta-grasp" evidence="6">
    <location>
        <begin position="14"/>
        <end position="98"/>
    </location>
</feature>
<feature type="domain" description="GS catalytic" evidence="7">
    <location>
        <begin position="106"/>
        <end position="467"/>
    </location>
</feature>
<feature type="binding site" evidence="4">
    <location>
        <position position="131"/>
    </location>
    <ligand>
        <name>Mg(2+)</name>
        <dbReference type="ChEBI" id="CHEBI:18420"/>
        <label>1</label>
    </ligand>
</feature>
<feature type="binding site" evidence="4">
    <location>
        <position position="133"/>
    </location>
    <ligand>
        <name>Mg(2+)</name>
        <dbReference type="ChEBI" id="CHEBI:18420"/>
        <label>2</label>
    </ligand>
</feature>
<feature type="binding site" evidence="4">
    <location>
        <position position="209"/>
    </location>
    <ligand>
        <name>ATP</name>
        <dbReference type="ChEBI" id="CHEBI:30616"/>
    </ligand>
</feature>
<feature type="binding site" evidence="4">
    <location>
        <position position="214"/>
    </location>
    <ligand>
        <name>Mg(2+)</name>
        <dbReference type="ChEBI" id="CHEBI:18420"/>
        <label>2</label>
    </ligand>
</feature>
<feature type="binding site" evidence="4">
    <location>
        <position position="221"/>
    </location>
    <ligand>
        <name>Mg(2+)</name>
        <dbReference type="ChEBI" id="CHEBI:18420"/>
        <label>2</label>
    </ligand>
</feature>
<feature type="binding site" evidence="1">
    <location>
        <begin position="265"/>
        <end position="266"/>
    </location>
    <ligand>
        <name>L-glutamate</name>
        <dbReference type="ChEBI" id="CHEBI:29985"/>
    </ligand>
</feature>
<feature type="binding site" evidence="2">
    <location>
        <position position="266"/>
    </location>
    <ligand>
        <name>L-glutamate</name>
        <dbReference type="ChEBI" id="CHEBI:29985"/>
    </ligand>
</feature>
<feature type="binding site" evidence="4">
    <location>
        <position position="270"/>
    </location>
    <ligand>
        <name>Mg(2+)</name>
        <dbReference type="ChEBI" id="CHEBI:18420"/>
        <label>1</label>
    </ligand>
</feature>
<feature type="binding site" evidence="1">
    <location>
        <begin position="272"/>
        <end position="274"/>
    </location>
    <ligand>
        <name>ATP</name>
        <dbReference type="ChEBI" id="CHEBI:30616"/>
    </ligand>
</feature>
<feature type="binding site" evidence="3">
    <location>
        <position position="274"/>
    </location>
    <ligand>
        <name>ATP</name>
        <dbReference type="ChEBI" id="CHEBI:30616"/>
    </ligand>
</feature>
<feature type="binding site" evidence="1">
    <location>
        <position position="320"/>
    </location>
    <ligand>
        <name>L-glutamate</name>
        <dbReference type="ChEBI" id="CHEBI:29985"/>
    </ligand>
</feature>
<feature type="binding site" evidence="1">
    <location>
        <position position="326"/>
    </location>
    <ligand>
        <name>L-glutamate</name>
        <dbReference type="ChEBI" id="CHEBI:29985"/>
    </ligand>
</feature>
<feature type="binding site" evidence="4">
    <location>
        <position position="338"/>
    </location>
    <ligand>
        <name>ATP</name>
        <dbReference type="ChEBI" id="CHEBI:30616"/>
    </ligand>
</feature>
<feature type="binding site" evidence="4">
    <location>
        <position position="338"/>
    </location>
    <ligand>
        <name>L-glutamate</name>
        <dbReference type="ChEBI" id="CHEBI:29985"/>
    </ligand>
</feature>
<feature type="binding site" evidence="4">
    <location>
        <position position="343"/>
    </location>
    <ligand>
        <name>ATP</name>
        <dbReference type="ChEBI" id="CHEBI:30616"/>
    </ligand>
</feature>
<feature type="binding site" evidence="4">
    <location>
        <position position="356"/>
    </location>
    <ligand>
        <name>Mg(2+)</name>
        <dbReference type="ChEBI" id="CHEBI:18420"/>
        <label>1</label>
    </ligand>
</feature>
<feature type="binding site" evidence="1">
    <location>
        <position position="358"/>
    </location>
    <ligand>
        <name>L-glutamate</name>
        <dbReference type="ChEBI" id="CHEBI:29985"/>
    </ligand>
</feature>
<feature type="modified residue" description="O-AMP-tyrosine" evidence="4">
    <location>
        <position position="396"/>
    </location>
</feature>
<keyword id="KW-0067">ATP-binding</keyword>
<keyword id="KW-0963">Cytoplasm</keyword>
<keyword id="KW-0436">Ligase</keyword>
<keyword id="KW-0460">Magnesium</keyword>
<keyword id="KW-0479">Metal-binding</keyword>
<keyword id="KW-0535">Nitrogen fixation</keyword>
<keyword id="KW-0547">Nucleotide-binding</keyword>
<keyword id="KW-0597">Phosphoprotein</keyword>
<organism>
    <name type="scientific">Cereibacter sphaeroides</name>
    <name type="common">Rhodobacter sphaeroides</name>
    <dbReference type="NCBI Taxonomy" id="1063"/>
    <lineage>
        <taxon>Bacteria</taxon>
        <taxon>Pseudomonadati</taxon>
        <taxon>Pseudomonadota</taxon>
        <taxon>Alphaproteobacteria</taxon>
        <taxon>Rhodobacterales</taxon>
        <taxon>Paracoccaceae</taxon>
        <taxon>Cereibacter</taxon>
    </lineage>
</organism>
<sequence length="467" mass="51964">MSKVADALKLMKDEEVEYVDIRFTDPRGKLQHVTLVADLVDEDFFEEGFMFDGSSIAGWKSIDQSDMKLIPDAGSVYIDPFYAEKTLCVHCNVVEPDTGEAYSRDPRGAAVKAEAYLKASGIGDVAYFGPEAEFFIFDDVRYSVTPAKVAYQIDADAGAWNTDSEYEMGNLAHRAGHKGGYFPVNPIDEAQDLRGEMLSTMKRMGMKVDKHHHEVATCQHELGLIFGGLTEQADNILKYKYVIHNVAGMHGKTVTFMPKPMKGDNGSGMHVNMSIWKEQALFAGDKYADLSQEALWFIGGILKQPSVNALTNPATNSYKRLIPGFEAPVLRAYSARNRSGCVRIPWTESPNAKRVEARFPDPSANPYLAFAALLMAGLDGIKNKIDPGPASDKDLYDLPPEELAAIPTVCGSLREALEELEKDHDFLLAGDVFTKDQLEGYMALKWEEVYAYEHTPHPVEYQMYYSC</sequence>
<evidence type="ECO:0000250" key="1">
    <source>
        <dbReference type="UniProtKB" id="P0A1P6"/>
    </source>
</evidence>
<evidence type="ECO:0000250" key="2">
    <source>
        <dbReference type="UniProtKB" id="P12425"/>
    </source>
</evidence>
<evidence type="ECO:0000250" key="3">
    <source>
        <dbReference type="UniProtKB" id="P77961"/>
    </source>
</evidence>
<evidence type="ECO:0000250" key="4">
    <source>
        <dbReference type="UniProtKB" id="P9WN39"/>
    </source>
</evidence>
<evidence type="ECO:0000250" key="5">
    <source>
        <dbReference type="UniProtKB" id="Q3V5W6"/>
    </source>
</evidence>
<evidence type="ECO:0000255" key="6">
    <source>
        <dbReference type="PROSITE-ProRule" id="PRU01330"/>
    </source>
</evidence>
<evidence type="ECO:0000255" key="7">
    <source>
        <dbReference type="PROSITE-ProRule" id="PRU01331"/>
    </source>
</evidence>
<evidence type="ECO:0000305" key="8"/>